<organism>
    <name type="scientific">Arabidopsis thaliana</name>
    <name type="common">Mouse-ear cress</name>
    <dbReference type="NCBI Taxonomy" id="3702"/>
    <lineage>
        <taxon>Eukaryota</taxon>
        <taxon>Viridiplantae</taxon>
        <taxon>Streptophyta</taxon>
        <taxon>Embryophyta</taxon>
        <taxon>Tracheophyta</taxon>
        <taxon>Spermatophyta</taxon>
        <taxon>Magnoliopsida</taxon>
        <taxon>eudicotyledons</taxon>
        <taxon>Gunneridae</taxon>
        <taxon>Pentapetalae</taxon>
        <taxon>rosids</taxon>
        <taxon>malvids</taxon>
        <taxon>Brassicales</taxon>
        <taxon>Brassicaceae</taxon>
        <taxon>Camelineae</taxon>
        <taxon>Arabidopsis</taxon>
    </lineage>
</organism>
<sequence>MNPTQTLFSPGGNSPASSPASHPSSLFPQINNCRTIRDLSQIHAVFIKSGQMRDTLAAAEILRFCATSDLHHRDLDYAHKIFNQMPQRNCFSWNTIIRGFSESDEDKALIAITLFYEMMSDEFVEPNRFTFPSVLKACAKTGKIQEGKQIHGLALKYGFGGDEFVMSNLVRMYVMCGFMKDARVLFYKNIIEKDMVVMTDRRKRDGEIVLWNVMIDGYMRLGDCKAARMLFDKMRQRSVVSWNTMISGYSLNGFFKDAVEVFREMKKGDIRPNYVTLVSVLPAISRLGSLELGEWLHLYAEDSGIRIDDVLGSALIDMYSKCGIIEKAIHVFERLPRENVITWSAMINGFAIHGQAGDAIDCFCKMRQAGVRPSDVAYINLLTACSHGGLVEEGRRYFSQMVSVDGLEPRIEHYGCMVDLLGRSGLLDEAEEFILNMPIKPDDVIWKALLGACRMQGNVEMGKRVANILMDMVPHDSGAYVALSNMYASQGNWSEVSEMRLRMKEKDIRKDPGCSLIDIDGVLHEFVVEDDSHPKAKEINSMLVEISDKLRLAGYRPITTQVLLNLEEEDKENVLHYHSEKIATAFGLISTSPGKPIRIVKNLRICEDCHSSIKLISKVYKRKITVRDRKRFHHFQDGSCSCMDYW</sequence>
<comment type="similarity">
    <text evidence="2">Belongs to the PPR family. PCMP-H subfamily.</text>
</comment>
<comment type="online information" name="Pentatricopeptide repeat proteins">
    <link uri="https://ppr.plantenergy.uwa.edu.au"/>
</comment>
<keyword id="KW-1185">Reference proteome</keyword>
<keyword id="KW-0677">Repeat</keyword>
<proteinExistence type="evidence at transcript level"/>
<gene>
    <name type="primary">PCMP-H38</name>
    <name type="ordered locus">At5g48910</name>
    <name type="ORF">K19E20.2</name>
</gene>
<feature type="chain" id="PRO_0000363562" description="Pentatricopeptide repeat-containing protein At5g48910">
    <location>
        <begin position="1"/>
        <end position="646"/>
    </location>
</feature>
<feature type="repeat" description="PPR 1">
    <location>
        <begin position="54"/>
        <end position="88"/>
    </location>
</feature>
<feature type="repeat" description="PPR 2">
    <location>
        <begin position="89"/>
        <end position="126"/>
    </location>
</feature>
<feature type="repeat" description="PPR 3">
    <location>
        <begin position="127"/>
        <end position="161"/>
    </location>
</feature>
<feature type="repeat" description="PPR 4">
    <location>
        <begin position="162"/>
        <end position="197"/>
    </location>
</feature>
<feature type="repeat" description="PPR 5">
    <location>
        <begin position="207"/>
        <end position="237"/>
    </location>
</feature>
<feature type="repeat" description="PPR 6">
    <location>
        <begin position="238"/>
        <end position="272"/>
    </location>
</feature>
<feature type="repeat" description="PPR 7">
    <location>
        <begin position="273"/>
        <end position="307"/>
    </location>
</feature>
<feature type="repeat" description="PPR 8">
    <location>
        <begin position="308"/>
        <end position="338"/>
    </location>
</feature>
<feature type="repeat" description="PPR 9">
    <location>
        <begin position="339"/>
        <end position="373"/>
    </location>
</feature>
<feature type="repeat" description="PPR 10">
    <location>
        <begin position="374"/>
        <end position="409"/>
    </location>
</feature>
<feature type="repeat" description="PPR 11">
    <location>
        <begin position="410"/>
        <end position="440"/>
    </location>
</feature>
<feature type="region of interest" description="Disordered" evidence="1">
    <location>
        <begin position="1"/>
        <end position="24"/>
    </location>
</feature>
<feature type="region of interest" description="Type E motif">
    <location>
        <begin position="445"/>
        <end position="520"/>
    </location>
</feature>
<feature type="region of interest" description="Type E(+) motif">
    <location>
        <begin position="521"/>
        <end position="551"/>
    </location>
</feature>
<feature type="region of interest" description="Type DYW motif">
    <location>
        <begin position="552"/>
        <end position="646"/>
    </location>
</feature>
<feature type="compositionally biased region" description="Low complexity" evidence="1">
    <location>
        <begin position="9"/>
        <end position="24"/>
    </location>
</feature>
<name>PP425_ARATH</name>
<evidence type="ECO:0000256" key="1">
    <source>
        <dbReference type="SAM" id="MobiDB-lite"/>
    </source>
</evidence>
<evidence type="ECO:0000305" key="2"/>
<accession>Q9FI80</accession>
<dbReference type="EMBL" id="AB017061">
    <property type="protein sequence ID" value="BAB10314.1"/>
    <property type="molecule type" value="Genomic_DNA"/>
</dbReference>
<dbReference type="EMBL" id="CP002688">
    <property type="protein sequence ID" value="AED95742.1"/>
    <property type="molecule type" value="Genomic_DNA"/>
</dbReference>
<dbReference type="EMBL" id="AY056318">
    <property type="protein sequence ID" value="AAL07167.1"/>
    <property type="molecule type" value="mRNA"/>
</dbReference>
<dbReference type="RefSeq" id="NP_199702.1">
    <property type="nucleotide sequence ID" value="NM_124268.2"/>
</dbReference>
<dbReference type="SMR" id="Q9FI80"/>
<dbReference type="FunCoup" id="Q9FI80">
    <property type="interactions" value="301"/>
</dbReference>
<dbReference type="STRING" id="3702.Q9FI80"/>
<dbReference type="PaxDb" id="3702-AT5G48910.1"/>
<dbReference type="ProteomicsDB" id="249306"/>
<dbReference type="EnsemblPlants" id="AT5G48910.1">
    <property type="protein sequence ID" value="AT5G48910.1"/>
    <property type="gene ID" value="AT5G48910"/>
</dbReference>
<dbReference type="GeneID" id="834949"/>
<dbReference type="Gramene" id="AT5G48910.1">
    <property type="protein sequence ID" value="AT5G48910.1"/>
    <property type="gene ID" value="AT5G48910"/>
</dbReference>
<dbReference type="KEGG" id="ath:AT5G48910"/>
<dbReference type="Araport" id="AT5G48910"/>
<dbReference type="TAIR" id="AT5G48910">
    <property type="gene designation" value="LPA66"/>
</dbReference>
<dbReference type="eggNOG" id="KOG4197">
    <property type="taxonomic scope" value="Eukaryota"/>
</dbReference>
<dbReference type="HOGENOM" id="CLU_002706_37_2_1"/>
<dbReference type="InParanoid" id="Q9FI80"/>
<dbReference type="OMA" id="HMPDTTQ"/>
<dbReference type="PhylomeDB" id="Q9FI80"/>
<dbReference type="PRO" id="PR:Q9FI80"/>
<dbReference type="Proteomes" id="UP000006548">
    <property type="component" value="Chromosome 5"/>
</dbReference>
<dbReference type="ExpressionAtlas" id="Q9FI80">
    <property type="expression patterns" value="baseline and differential"/>
</dbReference>
<dbReference type="GO" id="GO:0009507">
    <property type="term" value="C:chloroplast"/>
    <property type="evidence" value="ECO:0000314"/>
    <property type="project" value="TAIR"/>
</dbReference>
<dbReference type="GO" id="GO:0003729">
    <property type="term" value="F:mRNA binding"/>
    <property type="evidence" value="ECO:0000314"/>
    <property type="project" value="TAIR"/>
</dbReference>
<dbReference type="GO" id="GO:0008270">
    <property type="term" value="F:zinc ion binding"/>
    <property type="evidence" value="ECO:0007669"/>
    <property type="project" value="InterPro"/>
</dbReference>
<dbReference type="GO" id="GO:0009451">
    <property type="term" value="P:RNA modification"/>
    <property type="evidence" value="ECO:0000315"/>
    <property type="project" value="TAIR"/>
</dbReference>
<dbReference type="FunFam" id="1.25.40.10:FF:000333">
    <property type="entry name" value="Pentatricopeptide repeat-containing protein"/>
    <property type="match status" value="1"/>
</dbReference>
<dbReference type="FunFam" id="1.25.40.10:FF:000690">
    <property type="entry name" value="Pentatricopeptide repeat-containing protein"/>
    <property type="match status" value="1"/>
</dbReference>
<dbReference type="FunFam" id="1.25.40.10:FF:000470">
    <property type="entry name" value="Pentatricopeptide repeat-containing protein At5g66520"/>
    <property type="match status" value="1"/>
</dbReference>
<dbReference type="Gene3D" id="1.25.40.10">
    <property type="entry name" value="Tetratricopeptide repeat domain"/>
    <property type="match status" value="3"/>
</dbReference>
<dbReference type="InterPro" id="IPR032867">
    <property type="entry name" value="DYW_dom"/>
</dbReference>
<dbReference type="InterPro" id="IPR046848">
    <property type="entry name" value="E_motif"/>
</dbReference>
<dbReference type="InterPro" id="IPR002885">
    <property type="entry name" value="Pentatricopeptide_rpt"/>
</dbReference>
<dbReference type="InterPro" id="IPR046960">
    <property type="entry name" value="PPR_At4g14850-like_plant"/>
</dbReference>
<dbReference type="InterPro" id="IPR011990">
    <property type="entry name" value="TPR-like_helical_dom_sf"/>
</dbReference>
<dbReference type="NCBIfam" id="TIGR00756">
    <property type="entry name" value="PPR"/>
    <property type="match status" value="3"/>
</dbReference>
<dbReference type="PANTHER" id="PTHR47926">
    <property type="entry name" value="PENTATRICOPEPTIDE REPEAT-CONTAINING PROTEIN"/>
    <property type="match status" value="1"/>
</dbReference>
<dbReference type="PANTHER" id="PTHR47926:SF452">
    <property type="entry name" value="PENTATRICOPEPTIDE REPEAT-CONTAINING PROTEIN"/>
    <property type="match status" value="1"/>
</dbReference>
<dbReference type="Pfam" id="PF14432">
    <property type="entry name" value="DYW_deaminase"/>
    <property type="match status" value="1"/>
</dbReference>
<dbReference type="Pfam" id="PF20431">
    <property type="entry name" value="E_motif"/>
    <property type="match status" value="1"/>
</dbReference>
<dbReference type="Pfam" id="PF01535">
    <property type="entry name" value="PPR"/>
    <property type="match status" value="1"/>
</dbReference>
<dbReference type="Pfam" id="PF13041">
    <property type="entry name" value="PPR_2"/>
    <property type="match status" value="2"/>
</dbReference>
<dbReference type="PROSITE" id="PS51375">
    <property type="entry name" value="PPR"/>
    <property type="match status" value="12"/>
</dbReference>
<reference key="1">
    <citation type="journal article" date="1999" name="DNA Res.">
        <title>Structural analysis of Arabidopsis thaliana chromosome 5. IX. Sequence features of the regions of 1,011,550 bp covered by seventeen P1 and TAC clones.</title>
        <authorList>
            <person name="Kaneko T."/>
            <person name="Katoh T."/>
            <person name="Sato S."/>
            <person name="Nakamura Y."/>
            <person name="Asamizu E."/>
            <person name="Kotani H."/>
            <person name="Miyajima N."/>
            <person name="Tabata S."/>
        </authorList>
    </citation>
    <scope>NUCLEOTIDE SEQUENCE [LARGE SCALE GENOMIC DNA]</scope>
    <source>
        <strain>cv. Columbia</strain>
    </source>
</reference>
<reference key="2">
    <citation type="journal article" date="2017" name="Plant J.">
        <title>Araport11: a complete reannotation of the Arabidopsis thaliana reference genome.</title>
        <authorList>
            <person name="Cheng C.Y."/>
            <person name="Krishnakumar V."/>
            <person name="Chan A.P."/>
            <person name="Thibaud-Nissen F."/>
            <person name="Schobel S."/>
            <person name="Town C.D."/>
        </authorList>
    </citation>
    <scope>GENOME REANNOTATION</scope>
    <source>
        <strain>cv. Columbia</strain>
    </source>
</reference>
<reference key="3">
    <citation type="journal article" date="2003" name="Science">
        <title>Empirical analysis of transcriptional activity in the Arabidopsis genome.</title>
        <authorList>
            <person name="Yamada K."/>
            <person name="Lim J."/>
            <person name="Dale J.M."/>
            <person name="Chen H."/>
            <person name="Shinn P."/>
            <person name="Palm C.J."/>
            <person name="Southwick A.M."/>
            <person name="Wu H.C."/>
            <person name="Kim C.J."/>
            <person name="Nguyen M."/>
            <person name="Pham P.K."/>
            <person name="Cheuk R.F."/>
            <person name="Karlin-Newmann G."/>
            <person name="Liu S.X."/>
            <person name="Lam B."/>
            <person name="Sakano H."/>
            <person name="Wu T."/>
            <person name="Yu G."/>
            <person name="Miranda M."/>
            <person name="Quach H.L."/>
            <person name="Tripp M."/>
            <person name="Chang C.H."/>
            <person name="Lee J.M."/>
            <person name="Toriumi M.J."/>
            <person name="Chan M.M."/>
            <person name="Tang C.C."/>
            <person name="Onodera C.S."/>
            <person name="Deng J.M."/>
            <person name="Akiyama K."/>
            <person name="Ansari Y."/>
            <person name="Arakawa T."/>
            <person name="Banh J."/>
            <person name="Banno F."/>
            <person name="Bowser L."/>
            <person name="Brooks S.Y."/>
            <person name="Carninci P."/>
            <person name="Chao Q."/>
            <person name="Choy N."/>
            <person name="Enju A."/>
            <person name="Goldsmith A.D."/>
            <person name="Gurjal M."/>
            <person name="Hansen N.F."/>
            <person name="Hayashizaki Y."/>
            <person name="Johnson-Hopson C."/>
            <person name="Hsuan V.W."/>
            <person name="Iida K."/>
            <person name="Karnes M."/>
            <person name="Khan S."/>
            <person name="Koesema E."/>
            <person name="Ishida J."/>
            <person name="Jiang P.X."/>
            <person name="Jones T."/>
            <person name="Kawai J."/>
            <person name="Kamiya A."/>
            <person name="Meyers C."/>
            <person name="Nakajima M."/>
            <person name="Narusaka M."/>
            <person name="Seki M."/>
            <person name="Sakurai T."/>
            <person name="Satou M."/>
            <person name="Tamse R."/>
            <person name="Vaysberg M."/>
            <person name="Wallender E.K."/>
            <person name="Wong C."/>
            <person name="Yamamura Y."/>
            <person name="Yuan S."/>
            <person name="Shinozaki K."/>
            <person name="Davis R.W."/>
            <person name="Theologis A."/>
            <person name="Ecker J.R."/>
        </authorList>
    </citation>
    <scope>NUCLEOTIDE SEQUENCE [LARGE SCALE MRNA]</scope>
    <source>
        <strain>cv. Columbia</strain>
    </source>
</reference>
<reference key="4">
    <citation type="journal article" date="2000" name="Plant Mol. Biol.">
        <title>In Arabidopsis thaliana, 1% of the genome codes for a novel protein family unique to plants.</title>
        <authorList>
            <person name="Aubourg S."/>
            <person name="Boudet N."/>
            <person name="Kreis M."/>
            <person name="Lecharny A."/>
        </authorList>
    </citation>
    <scope>GENE FAMILY</scope>
</reference>
<reference key="5">
    <citation type="journal article" date="2004" name="Plant Cell">
        <title>Genome-wide analysis of Arabidopsis pentatricopeptide repeat proteins reveals their essential role in organelle biogenesis.</title>
        <authorList>
            <person name="Lurin C."/>
            <person name="Andres C."/>
            <person name="Aubourg S."/>
            <person name="Bellaoui M."/>
            <person name="Bitton F."/>
            <person name="Bruyere C."/>
            <person name="Caboche M."/>
            <person name="Debast C."/>
            <person name="Gualberto J."/>
            <person name="Hoffmann B."/>
            <person name="Lecharny A."/>
            <person name="Le Ret M."/>
            <person name="Martin-Magniette M.-L."/>
            <person name="Mireau H."/>
            <person name="Peeters N."/>
            <person name="Renou J.-P."/>
            <person name="Szurek B."/>
            <person name="Taconnat L."/>
            <person name="Small I."/>
        </authorList>
    </citation>
    <scope>GENE FAMILY</scope>
</reference>
<protein>
    <recommendedName>
        <fullName>Pentatricopeptide repeat-containing protein At5g48910</fullName>
    </recommendedName>
</protein>